<accession>Q8N8Q8</accession>
<accession>Q2PB66</accession>
<accession>Q2PB67</accession>
<accession>Q2PB68</accession>
<accession>Q49B97</accession>
<accession>Q6IPP9</accession>
<evidence type="ECO:0000255" key="1"/>
<evidence type="ECO:0000269" key="2">
    <source>
    </source>
</evidence>
<evidence type="ECO:0000269" key="3">
    <source>
    </source>
</evidence>
<evidence type="ECO:0000269" key="4">
    <source>
    </source>
</evidence>
<evidence type="ECO:0000269" key="5">
    <source>
    </source>
</evidence>
<evidence type="ECO:0000303" key="6">
    <source>
    </source>
</evidence>
<evidence type="ECO:0000303" key="7">
    <source>
    </source>
</evidence>
<evidence type="ECO:0000305" key="8"/>
<evidence type="ECO:0000305" key="9">
    <source>
    </source>
</evidence>
<keyword id="KW-0025">Alternative splicing</keyword>
<keyword id="KW-0472">Membrane</keyword>
<keyword id="KW-0496">Mitochondrion</keyword>
<keyword id="KW-0999">Mitochondrion inner membrane</keyword>
<keyword id="KW-1267">Proteomics identification</keyword>
<keyword id="KW-1185">Reference proteome</keyword>
<keyword id="KW-0809">Transit peptide</keyword>
<keyword id="KW-0812">Transmembrane</keyword>
<keyword id="KW-1133">Transmembrane helix</keyword>
<organism>
    <name type="scientific">Homo sapiens</name>
    <name type="common">Human</name>
    <dbReference type="NCBI Taxonomy" id="9606"/>
    <lineage>
        <taxon>Eukaryota</taxon>
        <taxon>Metazoa</taxon>
        <taxon>Chordata</taxon>
        <taxon>Craniata</taxon>
        <taxon>Vertebrata</taxon>
        <taxon>Euteleostomi</taxon>
        <taxon>Mammalia</taxon>
        <taxon>Eutheria</taxon>
        <taxon>Euarchontoglires</taxon>
        <taxon>Primates</taxon>
        <taxon>Haplorrhini</taxon>
        <taxon>Catarrhini</taxon>
        <taxon>Hominidae</taxon>
        <taxon>Homo</taxon>
    </lineage>
</organism>
<protein>
    <recommendedName>
        <fullName>Cytochrome c oxidase assembly protein COX18, mitochondrial</fullName>
        <shortName>COX18Hs</shortName>
    </recommendedName>
    <alternativeName>
        <fullName>Cytochrome c oxidase assembly protein 18</fullName>
    </alternativeName>
</protein>
<reference key="1">
    <citation type="journal article" date="2005" name="Biochem. Biophys. Res. Commun.">
        <title>hCOX18 and hCOX19: two human genes involved in cytochrome c oxidase assembly.</title>
        <authorList>
            <person name="Sacconi S."/>
            <person name="Trevisson E."/>
            <person name="Pistollato F."/>
            <person name="Baldoin M.C."/>
            <person name="Rezzonico R."/>
            <person name="Bourget I."/>
            <person name="Desnuelle C."/>
            <person name="Tenconi R."/>
            <person name="Basso G."/>
            <person name="DiMauro S."/>
            <person name="Salviati L."/>
        </authorList>
    </citation>
    <scope>NUCLEOTIDE SEQUENCE [MRNA] (ISOFORM 1)</scope>
    <scope>SUBCELLULAR LOCATION</scope>
    <scope>TOPOLOGY</scope>
</reference>
<reference key="2">
    <citation type="journal article" date="2004" name="Nat. Genet.">
        <title>Complete sequencing and characterization of 21,243 full-length human cDNAs.</title>
        <authorList>
            <person name="Ota T."/>
            <person name="Suzuki Y."/>
            <person name="Nishikawa T."/>
            <person name="Otsuki T."/>
            <person name="Sugiyama T."/>
            <person name="Irie R."/>
            <person name="Wakamatsu A."/>
            <person name="Hayashi K."/>
            <person name="Sato H."/>
            <person name="Nagai K."/>
            <person name="Kimura K."/>
            <person name="Makita H."/>
            <person name="Sekine M."/>
            <person name="Obayashi M."/>
            <person name="Nishi T."/>
            <person name="Shibahara T."/>
            <person name="Tanaka T."/>
            <person name="Ishii S."/>
            <person name="Yamamoto J."/>
            <person name="Saito K."/>
            <person name="Kawai Y."/>
            <person name="Isono Y."/>
            <person name="Nakamura Y."/>
            <person name="Nagahari K."/>
            <person name="Murakami K."/>
            <person name="Yasuda T."/>
            <person name="Iwayanagi T."/>
            <person name="Wagatsuma M."/>
            <person name="Shiratori A."/>
            <person name="Sudo H."/>
            <person name="Hosoiri T."/>
            <person name="Kaku Y."/>
            <person name="Kodaira H."/>
            <person name="Kondo H."/>
            <person name="Sugawara M."/>
            <person name="Takahashi M."/>
            <person name="Kanda K."/>
            <person name="Yokoi T."/>
            <person name="Furuya T."/>
            <person name="Kikkawa E."/>
            <person name="Omura Y."/>
            <person name="Abe K."/>
            <person name="Kamihara K."/>
            <person name="Katsuta N."/>
            <person name="Sato K."/>
            <person name="Tanikawa M."/>
            <person name="Yamazaki M."/>
            <person name="Ninomiya K."/>
            <person name="Ishibashi T."/>
            <person name="Yamashita H."/>
            <person name="Murakawa K."/>
            <person name="Fujimori K."/>
            <person name="Tanai H."/>
            <person name="Kimata M."/>
            <person name="Watanabe M."/>
            <person name="Hiraoka S."/>
            <person name="Chiba Y."/>
            <person name="Ishida S."/>
            <person name="Ono Y."/>
            <person name="Takiguchi S."/>
            <person name="Watanabe S."/>
            <person name="Yosida M."/>
            <person name="Hotuta T."/>
            <person name="Kusano J."/>
            <person name="Kanehori K."/>
            <person name="Takahashi-Fujii A."/>
            <person name="Hara H."/>
            <person name="Tanase T.-O."/>
            <person name="Nomura Y."/>
            <person name="Togiya S."/>
            <person name="Komai F."/>
            <person name="Hara R."/>
            <person name="Takeuchi K."/>
            <person name="Arita M."/>
            <person name="Imose N."/>
            <person name="Musashino K."/>
            <person name="Yuuki H."/>
            <person name="Oshima A."/>
            <person name="Sasaki N."/>
            <person name="Aotsuka S."/>
            <person name="Yoshikawa Y."/>
            <person name="Matsunawa H."/>
            <person name="Ichihara T."/>
            <person name="Shiohata N."/>
            <person name="Sano S."/>
            <person name="Moriya S."/>
            <person name="Momiyama H."/>
            <person name="Satoh N."/>
            <person name="Takami S."/>
            <person name="Terashima Y."/>
            <person name="Suzuki O."/>
            <person name="Nakagawa S."/>
            <person name="Senoh A."/>
            <person name="Mizoguchi H."/>
            <person name="Goto Y."/>
            <person name="Shimizu F."/>
            <person name="Wakebe H."/>
            <person name="Hishigaki H."/>
            <person name="Watanabe T."/>
            <person name="Sugiyama A."/>
            <person name="Takemoto M."/>
            <person name="Kawakami B."/>
            <person name="Yamazaki M."/>
            <person name="Watanabe K."/>
            <person name="Kumagai A."/>
            <person name="Itakura S."/>
            <person name="Fukuzumi Y."/>
            <person name="Fujimori Y."/>
            <person name="Komiyama M."/>
            <person name="Tashiro H."/>
            <person name="Tanigami A."/>
            <person name="Fujiwara T."/>
            <person name="Ono T."/>
            <person name="Yamada K."/>
            <person name="Fujii Y."/>
            <person name="Ozaki K."/>
            <person name="Hirao M."/>
            <person name="Ohmori Y."/>
            <person name="Kawabata A."/>
            <person name="Hikiji T."/>
            <person name="Kobatake N."/>
            <person name="Inagaki H."/>
            <person name="Ikema Y."/>
            <person name="Okamoto S."/>
            <person name="Okitani R."/>
            <person name="Kawakami T."/>
            <person name="Noguchi S."/>
            <person name="Itoh T."/>
            <person name="Shigeta K."/>
            <person name="Senba T."/>
            <person name="Matsumura K."/>
            <person name="Nakajima Y."/>
            <person name="Mizuno T."/>
            <person name="Morinaga M."/>
            <person name="Sasaki M."/>
            <person name="Togashi T."/>
            <person name="Oyama M."/>
            <person name="Hata H."/>
            <person name="Watanabe M."/>
            <person name="Komatsu T."/>
            <person name="Mizushima-Sugano J."/>
            <person name="Satoh T."/>
            <person name="Shirai Y."/>
            <person name="Takahashi Y."/>
            <person name="Nakagawa K."/>
            <person name="Okumura K."/>
            <person name="Nagase T."/>
            <person name="Nomura N."/>
            <person name="Kikuchi H."/>
            <person name="Masuho Y."/>
            <person name="Yamashita R."/>
            <person name="Nakai K."/>
            <person name="Yada T."/>
            <person name="Nakamura Y."/>
            <person name="Ohara O."/>
            <person name="Isogai T."/>
            <person name="Sugano S."/>
        </authorList>
    </citation>
    <scope>NUCLEOTIDE SEQUENCE [LARGE SCALE MRNA] (ISOFORM 1)</scope>
    <source>
        <tissue>Teratocarcinoma</tissue>
    </source>
</reference>
<reference key="3">
    <citation type="journal article" date="2004" name="Genome Res.">
        <title>The status, quality, and expansion of the NIH full-length cDNA project: the Mammalian Gene Collection (MGC).</title>
        <authorList>
            <consortium name="The MGC Project Team"/>
        </authorList>
    </citation>
    <scope>NUCLEOTIDE SEQUENCE [LARGE SCALE MRNA] (ISOFORMS 1 AND 4)</scope>
    <source>
        <tissue>Cerebellum</tissue>
    </source>
</reference>
<reference key="4">
    <citation type="journal article" date="2006" name="FEMS Yeast Res.">
        <title>The COX18 gene, involved in mitochondrial biogenesis, is functionally conserved and tightly regulated in humans and fission yeast.</title>
        <authorList>
            <person name="Gaisne M."/>
            <person name="Bonnefoy N."/>
        </authorList>
    </citation>
    <scope>NUCLEOTIDE SEQUENCE [MRNA] OF 81-333 (ISOFORMS 1; 2 AND 3)</scope>
    <scope>FUNCTION</scope>
    <source>
        <tissue>Skeletal muscle</tissue>
    </source>
</reference>
<reference key="5">
    <citation type="journal article" date="2017" name="Biochim. Biophys. Acta">
        <title>The mitochondrial TMEM177 associates with COX20 during COX2 biogenesis.</title>
        <authorList>
            <person name="Lorenzi I."/>
            <person name="Oeljeklaus S."/>
            <person name="Aich A."/>
            <person name="Ronsoer C."/>
            <person name="Callegari S."/>
            <person name="Dudek J."/>
            <person name="Warscheid B."/>
            <person name="Dennerlein S."/>
            <person name="Rehling P."/>
        </authorList>
    </citation>
    <scope>IDENTIFICATION IN A COMPLEX WITH TMEM177; COA6; MT-CO2; COX20; SCO1 AND SCO2</scope>
</reference>
<reference key="6">
    <citation type="journal article" date="2017" name="J. Biol. Chem.">
        <title>Human mitochondrial cytochrome c oxidase assembly factor COX18 acts transiently as a membrane insertase within the subunit 2 maturation module.</title>
        <authorList>
            <person name="Bourens M."/>
            <person name="Barrientos A."/>
        </authorList>
    </citation>
    <scope>FUNCTION</scope>
    <scope>SUBCELLULAR LOCATION</scope>
    <scope>INTERACTION WITH MT-CO2 AND COX20</scope>
</reference>
<comment type="function">
    <text evidence="3 4">Mitochondrial membrane insertase required for the translocation of the C-terminus of cytochrome c oxidase subunit II (MT-CO2/COX2) across the mitochondrial inner membrane. Plays a role in MT-CO2/COX2 maturation following the COX20-mediated stabilization of newly synthesized MT-CO2/COX2 protein and before the action of the metallochaperones SCO1/2. Essential for the assembly and stability of the mitochondrial respiratory chain complex IV (also known as cytochrome c oxidase).</text>
</comment>
<comment type="subunit">
    <text evidence="4 5">Found in a complex with TMEM177, COA6, MT-CO2/COX2, COX20, SCO1 and SCO2 (PubMed:29154948). Interacts transiently with MT-CO2/COX2 during its maturation (PubMed:28330871). Interacts with COX20 in a MT-CO2/COX2-dependent manner (PubMed:28330871).</text>
</comment>
<comment type="subcellular location">
    <subcellularLocation>
        <location evidence="2 4">Mitochondrion inner membrane</location>
        <topology evidence="2">Multi-pass membrane protein</topology>
    </subcellularLocation>
</comment>
<comment type="alternative products">
    <event type="alternative splicing"/>
    <isoform>
        <id>Q8N8Q8-1</id>
        <name>1</name>
        <name>Hs1</name>
        <sequence type="displayed"/>
    </isoform>
    <isoform>
        <id>Q8N8Q8-2</id>
        <name>2</name>
        <name>Hs2</name>
        <sequence type="described" ref="VSP_022312 VSP_022314"/>
    </isoform>
    <isoform>
        <id>Q8N8Q8-3</id>
        <name>3</name>
        <name>Hs3</name>
        <sequence type="described" ref="VSP_022311 VSP_022315"/>
    </isoform>
    <isoform>
        <id>Q8N8Q8-4</id>
        <name>4</name>
        <sequence type="described" ref="VSP_022313 VSP_022316"/>
    </isoform>
</comment>
<comment type="similarity">
    <text evidence="8">Belongs to the OXA1/ALB3/YidC family.</text>
</comment>
<comment type="sequence caution" evidence="8">
    <conflict type="miscellaneous discrepancy">
        <sequence resource="EMBL-CDS" id="AAH71812"/>
    </conflict>
    <text>Contaminating sequence. Potential poly-A sequence.</text>
</comment>
<name>COX18_HUMAN</name>
<dbReference type="EMBL" id="AY957564">
    <property type="protein sequence ID" value="AAY35060.1"/>
    <property type="molecule type" value="mRNA"/>
</dbReference>
<dbReference type="EMBL" id="AY957565">
    <property type="protein sequence ID" value="AAY35061.1"/>
    <property type="molecule type" value="mRNA"/>
</dbReference>
<dbReference type="EMBL" id="AK096310">
    <property type="protein sequence ID" value="BAC04758.1"/>
    <property type="molecule type" value="mRNA"/>
</dbReference>
<dbReference type="EMBL" id="BC071812">
    <property type="protein sequence ID" value="AAH71812.1"/>
    <property type="status" value="ALT_SEQ"/>
    <property type="molecule type" value="mRNA"/>
</dbReference>
<dbReference type="EMBL" id="BC101684">
    <property type="protein sequence ID" value="AAI01685.1"/>
    <property type="molecule type" value="mRNA"/>
</dbReference>
<dbReference type="EMBL" id="AM055750">
    <property type="protein sequence ID" value="CAJ20055.1"/>
    <property type="molecule type" value="mRNA"/>
</dbReference>
<dbReference type="EMBL" id="AM055751">
    <property type="protein sequence ID" value="CAJ20056.1"/>
    <property type="molecule type" value="mRNA"/>
</dbReference>
<dbReference type="EMBL" id="AM055752">
    <property type="protein sequence ID" value="CAJ20057.1"/>
    <property type="molecule type" value="mRNA"/>
</dbReference>
<dbReference type="CCDS" id="CCDS3554.1">
    <molecule id="Q8N8Q8-1"/>
</dbReference>
<dbReference type="RefSeq" id="NP_001284662.1">
    <property type="nucleotide sequence ID" value="NM_001297733.1"/>
</dbReference>
<dbReference type="RefSeq" id="NP_001287658.1">
    <property type="nucleotide sequence ID" value="NM_001300729.1"/>
</dbReference>
<dbReference type="RefSeq" id="NP_776188.1">
    <molecule id="Q8N8Q8-1"/>
    <property type="nucleotide sequence ID" value="NM_173827.4"/>
</dbReference>
<dbReference type="BioGRID" id="130132">
    <property type="interactions" value="9"/>
</dbReference>
<dbReference type="FunCoup" id="Q8N8Q8">
    <property type="interactions" value="499"/>
</dbReference>
<dbReference type="IntAct" id="Q8N8Q8">
    <property type="interactions" value="7"/>
</dbReference>
<dbReference type="MINT" id="Q8N8Q8"/>
<dbReference type="STRING" id="9606.ENSP00000425261"/>
<dbReference type="TCDB" id="2.A.9.1.3">
    <property type="family name" value="the membrane protein insertase (yidc/alb3/oxa1) family"/>
</dbReference>
<dbReference type="GlyGen" id="Q8N8Q8">
    <property type="glycosylation" value="1 site"/>
</dbReference>
<dbReference type="iPTMnet" id="Q8N8Q8"/>
<dbReference type="PhosphoSitePlus" id="Q8N8Q8"/>
<dbReference type="BioMuta" id="COX18"/>
<dbReference type="DMDM" id="38372495"/>
<dbReference type="jPOST" id="Q8N8Q8"/>
<dbReference type="MassIVE" id="Q8N8Q8"/>
<dbReference type="PaxDb" id="9606-ENSP00000425261"/>
<dbReference type="PeptideAtlas" id="Q8N8Q8"/>
<dbReference type="ProteomicsDB" id="72449">
    <molecule id="Q8N8Q8-1"/>
</dbReference>
<dbReference type="ProteomicsDB" id="72450">
    <molecule id="Q8N8Q8-2"/>
</dbReference>
<dbReference type="ProteomicsDB" id="72451">
    <molecule id="Q8N8Q8-3"/>
</dbReference>
<dbReference type="ProteomicsDB" id="72452">
    <molecule id="Q8N8Q8-4"/>
</dbReference>
<dbReference type="Pumba" id="Q8N8Q8"/>
<dbReference type="Antibodypedia" id="44370">
    <property type="antibodies" value="83 antibodies from 21 providers"/>
</dbReference>
<dbReference type="DNASU" id="285521"/>
<dbReference type="Ensembl" id="ENST00000295890.8">
    <molecule id="Q8N8Q8-1"/>
    <property type="protein sequence ID" value="ENSP00000295890.4"/>
    <property type="gene ID" value="ENSG00000163626.17"/>
</dbReference>
<dbReference type="Ensembl" id="ENST00000449739.6">
    <molecule id="Q8N8Q8-3"/>
    <property type="protein sequence ID" value="ENSP00000394583.2"/>
    <property type="gene ID" value="ENSG00000163626.17"/>
</dbReference>
<dbReference type="Ensembl" id="ENST00000510031.1">
    <molecule id="Q8N8Q8-2"/>
    <property type="protein sequence ID" value="ENSP00000424978.1"/>
    <property type="gene ID" value="ENSG00000163626.17"/>
</dbReference>
<dbReference type="GeneID" id="285521"/>
<dbReference type="KEGG" id="hsa:285521"/>
<dbReference type="UCSC" id="uc003hgm.2">
    <molecule id="Q8N8Q8-1"/>
    <property type="organism name" value="human"/>
</dbReference>
<dbReference type="AGR" id="HGNC:26801"/>
<dbReference type="CTD" id="285521"/>
<dbReference type="DisGeNET" id="285521"/>
<dbReference type="GeneCards" id="COX18"/>
<dbReference type="HGNC" id="HGNC:26801">
    <property type="gene designation" value="COX18"/>
</dbReference>
<dbReference type="HPA" id="ENSG00000163626">
    <property type="expression patterns" value="Low tissue specificity"/>
</dbReference>
<dbReference type="MalaCards" id="COX18"/>
<dbReference type="MIM" id="610428">
    <property type="type" value="gene"/>
</dbReference>
<dbReference type="neXtProt" id="NX_Q8N8Q8"/>
<dbReference type="OpenTargets" id="ENSG00000163626"/>
<dbReference type="PharmGKB" id="PA145008543"/>
<dbReference type="VEuPathDB" id="HostDB:ENSG00000163626"/>
<dbReference type="eggNOG" id="KOG1239">
    <property type="taxonomic scope" value="Eukaryota"/>
</dbReference>
<dbReference type="GeneTree" id="ENSGT00530000063506"/>
<dbReference type="HOGENOM" id="CLU_2003161_0_0_1"/>
<dbReference type="InParanoid" id="Q8N8Q8"/>
<dbReference type="OrthoDB" id="2148490at2759"/>
<dbReference type="PAN-GO" id="Q8N8Q8">
    <property type="GO annotations" value="4 GO annotations based on evolutionary models"/>
</dbReference>
<dbReference type="PhylomeDB" id="Q8N8Q8"/>
<dbReference type="TreeFam" id="TF323948"/>
<dbReference type="PathwayCommons" id="Q8N8Q8"/>
<dbReference type="Reactome" id="R-HSA-9864848">
    <property type="pathway name" value="Complex IV assembly"/>
</dbReference>
<dbReference type="SignaLink" id="Q8N8Q8"/>
<dbReference type="BioGRID-ORCS" id="285521">
    <property type="hits" value="117 hits in 1158 CRISPR screens"/>
</dbReference>
<dbReference type="ChiTaRS" id="COX18">
    <property type="organism name" value="human"/>
</dbReference>
<dbReference type="GenomeRNAi" id="285521"/>
<dbReference type="Pharos" id="Q8N8Q8">
    <property type="development level" value="Tbio"/>
</dbReference>
<dbReference type="PRO" id="PR:Q8N8Q8"/>
<dbReference type="Proteomes" id="UP000005640">
    <property type="component" value="Chromosome 4"/>
</dbReference>
<dbReference type="RNAct" id="Q8N8Q8">
    <property type="molecule type" value="protein"/>
</dbReference>
<dbReference type="Bgee" id="ENSG00000163626">
    <property type="expression patterns" value="Expressed in tibia and 188 other cell types or tissues"/>
</dbReference>
<dbReference type="ExpressionAtlas" id="Q8N8Q8">
    <property type="expression patterns" value="baseline and differential"/>
</dbReference>
<dbReference type="GO" id="GO:0005743">
    <property type="term" value="C:mitochondrial inner membrane"/>
    <property type="evidence" value="ECO:0000314"/>
    <property type="project" value="UniProtKB"/>
</dbReference>
<dbReference type="GO" id="GO:0005739">
    <property type="term" value="C:mitochondrion"/>
    <property type="evidence" value="ECO:0006056"/>
    <property type="project" value="FlyBase"/>
</dbReference>
<dbReference type="GO" id="GO:0032977">
    <property type="term" value="F:membrane insertase activity"/>
    <property type="evidence" value="ECO:0000314"/>
    <property type="project" value="UniProtKB"/>
</dbReference>
<dbReference type="GO" id="GO:0033617">
    <property type="term" value="P:mitochondrial cytochrome c oxidase assembly"/>
    <property type="evidence" value="ECO:0000315"/>
    <property type="project" value="UniProtKB"/>
</dbReference>
<dbReference type="GO" id="GO:0032979">
    <property type="term" value="P:protein insertion into mitochondrial inner membrane from matrix"/>
    <property type="evidence" value="ECO:0000314"/>
    <property type="project" value="UniProtKB"/>
</dbReference>
<dbReference type="GO" id="GO:0051204">
    <property type="term" value="P:protein insertion into mitochondrial membrane"/>
    <property type="evidence" value="ECO:0000316"/>
    <property type="project" value="UniProtKB"/>
</dbReference>
<dbReference type="GO" id="GO:0008535">
    <property type="term" value="P:respiratory chain complex IV assembly"/>
    <property type="evidence" value="ECO:0000316"/>
    <property type="project" value="UniProtKB"/>
</dbReference>
<dbReference type="CDD" id="cd20069">
    <property type="entry name" value="5TM_Oxa1-like"/>
    <property type="match status" value="1"/>
</dbReference>
<dbReference type="InterPro" id="IPR001708">
    <property type="entry name" value="YidC/ALB3/OXA1/COX18"/>
</dbReference>
<dbReference type="InterPro" id="IPR028055">
    <property type="entry name" value="YidC/Oxa/ALB_C"/>
</dbReference>
<dbReference type="PANTHER" id="PTHR12428:SF65">
    <property type="entry name" value="CYTOCHROME C OXIDASE ASSEMBLY PROTEIN COX18, MITOCHONDRIAL"/>
    <property type="match status" value="1"/>
</dbReference>
<dbReference type="PANTHER" id="PTHR12428">
    <property type="entry name" value="OXA1"/>
    <property type="match status" value="1"/>
</dbReference>
<dbReference type="Pfam" id="PF02096">
    <property type="entry name" value="60KD_IMP"/>
    <property type="match status" value="1"/>
</dbReference>
<sequence>MLCRLGGRWLRPLPALQLWARDLPLAPVPTSGAKRPTLPVWAVAPVSAVHANGWYEALAASSPVRVAEEVLLGVHAATGLPWWGSILLSTVALRGAVTLPLAAYQHYILAKVENLQPEIKTIARHLNQEVAVRANQLGWSKRDARLTYLKNMRRLISELYVRDNCHPFKATVLVWIQLPMWIFMSFALRNLSTGAAHSEGFSVQEQLATGGILWFPDLTAPDSTWILPISVGVINLLIVEICALQKIGMSRFQTYITYFVRAMSVLMIPIAATVPSSIVLYWLCSSFVGLSQNLLLRSPGFRQLCRIPSTKSDSETPYKDIFAAFNTKFISRK</sequence>
<gene>
    <name type="primary">COX18</name>
    <name type="synonym">OXA1L2</name>
</gene>
<feature type="transit peptide" description="Mitochondrion" evidence="1">
    <location>
        <begin position="1"/>
        <end status="unknown"/>
    </location>
</feature>
<feature type="chain" id="PRO_0000020354" description="Cytochrome c oxidase assembly protein COX18, mitochondrial">
    <location>
        <begin status="unknown"/>
        <end position="333"/>
    </location>
</feature>
<feature type="topological domain" description="Mitochondrial intermembrane" evidence="9">
    <location>
        <begin status="unknown"/>
        <end position="167"/>
    </location>
</feature>
<feature type="transmembrane region" description="Helical" evidence="1">
    <location>
        <begin position="168"/>
        <end position="188"/>
    </location>
</feature>
<feature type="topological domain" description="Mitochondrial matrix" evidence="9">
    <location>
        <begin position="189"/>
        <end position="223"/>
    </location>
</feature>
<feature type="transmembrane region" description="Helical" evidence="1">
    <location>
        <begin position="224"/>
        <end position="244"/>
    </location>
</feature>
<feature type="topological domain" description="Mitochondrial intermembrane" evidence="9">
    <location>
        <begin position="245"/>
        <end position="262"/>
    </location>
</feature>
<feature type="transmembrane region" description="Helical" evidence="1">
    <location>
        <begin position="263"/>
        <end position="283"/>
    </location>
</feature>
<feature type="topological domain" description="Mitochondrial matrix" evidence="9">
    <location>
        <begin position="284"/>
        <end position="333"/>
    </location>
</feature>
<feature type="splice variant" id="VSP_022311" description="In isoform 3." evidence="7">
    <original>VENLQPEIKTIARHLNQE</original>
    <variation>AHLSKEYEEANFRAICAR</variation>
    <location>
        <begin position="112"/>
        <end position="129"/>
    </location>
</feature>
<feature type="splice variant" id="VSP_022312" description="In isoform 2." evidence="7">
    <original>VENLQPEIKTIARHLN</original>
    <variation>LGGKFAARNKNYCQAS</variation>
    <location>
        <begin position="112"/>
        <end position="127"/>
    </location>
</feature>
<feature type="splice variant" id="VSP_022313" description="In isoform 4." evidence="6">
    <original>ENLQPEIKTIARHLNQEVAVRANQLGWSKRDARLT</original>
    <variation>VSMGKKNRKQNRNGISSNIKAVSHFTGRMSTGQEQ</variation>
    <location>
        <begin position="113"/>
        <end position="147"/>
    </location>
</feature>
<feature type="splice variant" id="VSP_022314" description="In isoform 2." evidence="7">
    <location>
        <begin position="128"/>
        <end position="333"/>
    </location>
</feature>
<feature type="splice variant" id="VSP_022315" description="In isoform 3." evidence="7">
    <location>
        <begin position="130"/>
        <end position="333"/>
    </location>
</feature>
<feature type="splice variant" id="VSP_022316" description="In isoform 4." evidence="6">
    <location>
        <begin position="148"/>
        <end position="333"/>
    </location>
</feature>
<feature type="sequence conflict" description="In Ref. 4; CAJ20055." evidence="8" ref="4">
    <original>K</original>
    <variation>R</variation>
    <location>
        <position position="311"/>
    </location>
</feature>
<proteinExistence type="evidence at protein level"/>